<proteinExistence type="inferred from homology"/>
<keyword id="KW-1185">Reference proteome</keyword>
<keyword id="KW-0687">Ribonucleoprotein</keyword>
<keyword id="KW-0689">Ribosomal protein</keyword>
<keyword id="KW-0694">RNA-binding</keyword>
<keyword id="KW-0699">rRNA-binding</keyword>
<accession>Q30ZH2</accession>
<feature type="chain" id="PRO_0000244208" description="Large ribosomal subunit protein bL25">
    <location>
        <begin position="1"/>
        <end position="193"/>
    </location>
</feature>
<name>RL25_OLEA2</name>
<comment type="function">
    <text evidence="1">This is one of the proteins that binds to the 5S RNA in the ribosome where it forms part of the central protuberance.</text>
</comment>
<comment type="subunit">
    <text evidence="1">Part of the 50S ribosomal subunit; part of the 5S rRNA/L5/L18/L25 subcomplex. Contacts the 5S rRNA. Binds to the 5S rRNA independently of L5 and L18.</text>
</comment>
<comment type="similarity">
    <text evidence="1">Belongs to the bacterial ribosomal protein bL25 family. CTC subfamily.</text>
</comment>
<gene>
    <name evidence="1" type="primary">rplY</name>
    <name evidence="1" type="synonym">ctc</name>
    <name type="ordered locus">Dde_2127</name>
</gene>
<organism>
    <name type="scientific">Oleidesulfovibrio alaskensis (strain ATCC BAA-1058 / DSM 17464 / G20)</name>
    <name type="common">Desulfovibrio alaskensis</name>
    <dbReference type="NCBI Taxonomy" id="207559"/>
    <lineage>
        <taxon>Bacteria</taxon>
        <taxon>Pseudomonadati</taxon>
        <taxon>Thermodesulfobacteriota</taxon>
        <taxon>Desulfovibrionia</taxon>
        <taxon>Desulfovibrionales</taxon>
        <taxon>Desulfovibrionaceae</taxon>
        <taxon>Oleidesulfovibrio</taxon>
    </lineage>
</organism>
<protein>
    <recommendedName>
        <fullName evidence="1">Large ribosomal subunit protein bL25</fullName>
    </recommendedName>
    <alternativeName>
        <fullName evidence="2">50S ribosomal protein L25</fullName>
    </alternativeName>
    <alternativeName>
        <fullName evidence="1">General stress protein CTC</fullName>
    </alternativeName>
</protein>
<reference key="1">
    <citation type="journal article" date="2011" name="J. Bacteriol.">
        <title>Complete genome sequence and updated annotation of Desulfovibrio alaskensis G20.</title>
        <authorList>
            <person name="Hauser L.J."/>
            <person name="Land M.L."/>
            <person name="Brown S.D."/>
            <person name="Larimer F."/>
            <person name="Keller K.L."/>
            <person name="Rapp-Giles B.J."/>
            <person name="Price M.N."/>
            <person name="Lin M."/>
            <person name="Bruce D.C."/>
            <person name="Detter J.C."/>
            <person name="Tapia R."/>
            <person name="Han C.S."/>
            <person name="Goodwin L.A."/>
            <person name="Cheng J.F."/>
            <person name="Pitluck S."/>
            <person name="Copeland A."/>
            <person name="Lucas S."/>
            <person name="Nolan M."/>
            <person name="Lapidus A.L."/>
            <person name="Palumbo A.V."/>
            <person name="Wall J.D."/>
        </authorList>
    </citation>
    <scope>NUCLEOTIDE SEQUENCE [LARGE SCALE GENOMIC DNA]</scope>
    <source>
        <strain>ATCC BAA-1058 / DSM 17464 / G20</strain>
    </source>
</reference>
<sequence>MSQQMTLSVQKREGLGKGANRKLRTAKKVPGIFYNSEGKNIPVAIDGTQLEKLYETAGKTTVFNLDIEGETAPCLIWQIERHPYKPFFTHVDLFGVDMEKPIKARIPLKITGVAKGTKIGGRMEVYRDFVDVFTKPGSMPKVIDINVSNMEMGDAVHVADLKLEDGHCIYDSNYVIVRVSAPRGGKGEEGEDA</sequence>
<evidence type="ECO:0000255" key="1">
    <source>
        <dbReference type="HAMAP-Rule" id="MF_01334"/>
    </source>
</evidence>
<evidence type="ECO:0000305" key="2"/>
<dbReference type="EMBL" id="CP000112">
    <property type="protein sequence ID" value="ABB38924.1"/>
    <property type="molecule type" value="Genomic_DNA"/>
</dbReference>
<dbReference type="RefSeq" id="WP_011368027.1">
    <property type="nucleotide sequence ID" value="NC_007519.1"/>
</dbReference>
<dbReference type="SMR" id="Q30ZH2"/>
<dbReference type="STRING" id="207559.Dde_2127"/>
<dbReference type="KEGG" id="dde:Dde_2127"/>
<dbReference type="eggNOG" id="COG1825">
    <property type="taxonomic scope" value="Bacteria"/>
</dbReference>
<dbReference type="HOGENOM" id="CLU_075939_0_1_7"/>
<dbReference type="Proteomes" id="UP000002710">
    <property type="component" value="Chromosome"/>
</dbReference>
<dbReference type="GO" id="GO:0022625">
    <property type="term" value="C:cytosolic large ribosomal subunit"/>
    <property type="evidence" value="ECO:0007669"/>
    <property type="project" value="TreeGrafter"/>
</dbReference>
<dbReference type="GO" id="GO:0008097">
    <property type="term" value="F:5S rRNA binding"/>
    <property type="evidence" value="ECO:0007669"/>
    <property type="project" value="InterPro"/>
</dbReference>
<dbReference type="GO" id="GO:0003735">
    <property type="term" value="F:structural constituent of ribosome"/>
    <property type="evidence" value="ECO:0007669"/>
    <property type="project" value="InterPro"/>
</dbReference>
<dbReference type="GO" id="GO:0006412">
    <property type="term" value="P:translation"/>
    <property type="evidence" value="ECO:0007669"/>
    <property type="project" value="UniProtKB-UniRule"/>
</dbReference>
<dbReference type="CDD" id="cd00495">
    <property type="entry name" value="Ribosomal_L25_TL5_CTC"/>
    <property type="match status" value="1"/>
</dbReference>
<dbReference type="Gene3D" id="2.170.120.20">
    <property type="entry name" value="Ribosomal protein L25, beta domain"/>
    <property type="match status" value="1"/>
</dbReference>
<dbReference type="Gene3D" id="2.40.240.10">
    <property type="entry name" value="Ribosomal Protein L25, Chain P"/>
    <property type="match status" value="1"/>
</dbReference>
<dbReference type="HAMAP" id="MF_01334">
    <property type="entry name" value="Ribosomal_bL25_CTC"/>
    <property type="match status" value="1"/>
</dbReference>
<dbReference type="InterPro" id="IPR020056">
    <property type="entry name" value="Rbsml_bL25/Gln-tRNA_synth_N"/>
</dbReference>
<dbReference type="InterPro" id="IPR011035">
    <property type="entry name" value="Ribosomal_bL25/Gln-tRNA_synth"/>
</dbReference>
<dbReference type="InterPro" id="IPR020057">
    <property type="entry name" value="Ribosomal_bL25_b-dom"/>
</dbReference>
<dbReference type="InterPro" id="IPR037121">
    <property type="entry name" value="Ribosomal_bL25_C"/>
</dbReference>
<dbReference type="InterPro" id="IPR001021">
    <property type="entry name" value="Ribosomal_bL25_long"/>
</dbReference>
<dbReference type="InterPro" id="IPR029751">
    <property type="entry name" value="Ribosomal_L25_dom"/>
</dbReference>
<dbReference type="InterPro" id="IPR020930">
    <property type="entry name" value="Ribosomal_uL5_bac-type"/>
</dbReference>
<dbReference type="NCBIfam" id="TIGR00731">
    <property type="entry name" value="bL25_bact_ctc"/>
    <property type="match status" value="1"/>
</dbReference>
<dbReference type="NCBIfam" id="NF004135">
    <property type="entry name" value="PRK05618.3-1"/>
    <property type="match status" value="1"/>
</dbReference>
<dbReference type="PANTHER" id="PTHR33284">
    <property type="entry name" value="RIBOSOMAL PROTEIN L25/GLN-TRNA SYNTHETASE, ANTI-CODON-BINDING DOMAIN-CONTAINING PROTEIN"/>
    <property type="match status" value="1"/>
</dbReference>
<dbReference type="PANTHER" id="PTHR33284:SF1">
    <property type="entry name" value="RIBOSOMAL PROTEIN L25_GLN-TRNA SYNTHETASE, ANTI-CODON-BINDING DOMAIN-CONTAINING PROTEIN"/>
    <property type="match status" value="1"/>
</dbReference>
<dbReference type="Pfam" id="PF01386">
    <property type="entry name" value="Ribosomal_L25p"/>
    <property type="match status" value="1"/>
</dbReference>
<dbReference type="Pfam" id="PF14693">
    <property type="entry name" value="Ribosomal_TL5_C"/>
    <property type="match status" value="1"/>
</dbReference>
<dbReference type="SUPFAM" id="SSF50715">
    <property type="entry name" value="Ribosomal protein L25-like"/>
    <property type="match status" value="1"/>
</dbReference>